<comment type="subcellular location">
    <subcellularLocation>
        <location evidence="1">Secreted</location>
    </subcellularLocation>
</comment>
<comment type="induction">
    <text>Upon contact with the plant pathogen fungus Fusarium solani.</text>
</comment>
<comment type="similarity">
    <text evidence="3">Belongs to the DEFL family.</text>
</comment>
<reference key="1">
    <citation type="journal article" date="1991" name="Mol. Plant Microbe Interact.">
        <title>The Fusarium solani-induced expression of a pea gene family encoding high cysteine content proteins.</title>
        <authorList>
            <person name="Chiang C.C."/>
            <person name="Hadwiger L.A."/>
        </authorList>
    </citation>
    <scope>NUCLEOTIDE SEQUENCE [MRNA]</scope>
    <source>
        <strain>cv. Alaska</strain>
    </source>
</reference>
<organism>
    <name type="scientific">Pisum sativum</name>
    <name type="common">Garden pea</name>
    <name type="synonym">Lathyrus oleraceus</name>
    <dbReference type="NCBI Taxonomy" id="3888"/>
    <lineage>
        <taxon>Eukaryota</taxon>
        <taxon>Viridiplantae</taxon>
        <taxon>Streptophyta</taxon>
        <taxon>Embryophyta</taxon>
        <taxon>Tracheophyta</taxon>
        <taxon>Spermatophyta</taxon>
        <taxon>Magnoliopsida</taxon>
        <taxon>eudicotyledons</taxon>
        <taxon>Gunneridae</taxon>
        <taxon>Pentapetalae</taxon>
        <taxon>rosids</taxon>
        <taxon>fabids</taxon>
        <taxon>Fabales</taxon>
        <taxon>Fabaceae</taxon>
        <taxon>Papilionoideae</taxon>
        <taxon>50 kb inversion clade</taxon>
        <taxon>NPAAA clade</taxon>
        <taxon>Hologalegina</taxon>
        <taxon>IRL clade</taxon>
        <taxon>Fabeae</taxon>
        <taxon>Pisum</taxon>
    </lineage>
</organism>
<feature type="signal peptide" evidence="2">
    <location>
        <begin position="1"/>
        <end position="27"/>
    </location>
</feature>
<feature type="chain" id="PRO_0000007045" description="Defensin-like protein 230">
    <location>
        <begin position="28"/>
        <end position="72"/>
    </location>
</feature>
<feature type="disulfide bond" evidence="1">
    <location>
        <begin position="30"/>
        <end position="72"/>
    </location>
</feature>
<feature type="disulfide bond" evidence="1">
    <location>
        <begin position="41"/>
        <end position="60"/>
    </location>
</feature>
<feature type="disulfide bond" evidence="1">
    <location>
        <begin position="45"/>
        <end position="66"/>
    </location>
</feature>
<feature type="disulfide bond" evidence="1">
    <location>
        <begin position="49"/>
        <end position="68"/>
    </location>
</feature>
<dbReference type="EMBL" id="L01578">
    <property type="protein sequence ID" value="AAA79117.1"/>
    <property type="molecule type" value="mRNA"/>
</dbReference>
<dbReference type="PIR" id="T06599">
    <property type="entry name" value="T06599"/>
</dbReference>
<dbReference type="SMR" id="Q01783"/>
<dbReference type="EnsemblPlants" id="Psat0s5174g0040.1">
    <property type="protein sequence ID" value="Psat0s5174g0040.1.cds"/>
    <property type="gene ID" value="Psat0s5174g0040"/>
</dbReference>
<dbReference type="EnsemblPlants" id="Psat5g242440.1">
    <property type="protein sequence ID" value="Psat5g242440.1.cds"/>
    <property type="gene ID" value="Psat5g242440"/>
</dbReference>
<dbReference type="Gramene" id="Psat0s5174g0040.1">
    <property type="protein sequence ID" value="Psat0s5174g0040.1.cds"/>
    <property type="gene ID" value="Psat0s5174g0040"/>
</dbReference>
<dbReference type="Gramene" id="Psat5g242440.1">
    <property type="protein sequence ID" value="Psat5g242440.1.cds"/>
    <property type="gene ID" value="Psat5g242440"/>
</dbReference>
<dbReference type="GO" id="GO:0005576">
    <property type="term" value="C:extracellular region"/>
    <property type="evidence" value="ECO:0007669"/>
    <property type="project" value="UniProtKB-SubCell"/>
</dbReference>
<dbReference type="GO" id="GO:0050832">
    <property type="term" value="P:defense response to fungus"/>
    <property type="evidence" value="ECO:0007669"/>
    <property type="project" value="UniProtKB-KW"/>
</dbReference>
<dbReference type="GO" id="GO:0031640">
    <property type="term" value="P:killing of cells of another organism"/>
    <property type="evidence" value="ECO:0007669"/>
    <property type="project" value="UniProtKB-KW"/>
</dbReference>
<dbReference type="Gene3D" id="3.30.30.10">
    <property type="entry name" value="Knottin, scorpion toxin-like"/>
    <property type="match status" value="1"/>
</dbReference>
<dbReference type="InterPro" id="IPR003614">
    <property type="entry name" value="Scorpion_toxin-like"/>
</dbReference>
<dbReference type="InterPro" id="IPR036574">
    <property type="entry name" value="Scorpion_toxin-like_sf"/>
</dbReference>
<dbReference type="Pfam" id="PF00304">
    <property type="entry name" value="Gamma-thionin"/>
    <property type="match status" value="1"/>
</dbReference>
<dbReference type="SMART" id="SM00505">
    <property type="entry name" value="Knot1"/>
    <property type="match status" value="1"/>
</dbReference>
<dbReference type="SUPFAM" id="SSF57095">
    <property type="entry name" value="Scorpion toxin-like"/>
    <property type="match status" value="1"/>
</dbReference>
<keyword id="KW-0929">Antimicrobial</keyword>
<keyword id="KW-1015">Disulfide bond</keyword>
<keyword id="KW-0295">Fungicide</keyword>
<keyword id="KW-0568">Pathogenesis-related protein</keyword>
<keyword id="KW-0611">Plant defense</keyword>
<keyword id="KW-0964">Secreted</keyword>
<keyword id="KW-0732">Signal</keyword>
<name>DF230_PEA</name>
<evidence type="ECO:0000250" key="1"/>
<evidence type="ECO:0000255" key="2"/>
<evidence type="ECO:0000305" key="3"/>
<sequence>MEKKSLACLSFLLLVLFVAQEIVVSEANTCENLAGSYKGVCFGGCDRHCRTQEGAISGRCRDDFRCWCTKNC</sequence>
<protein>
    <recommendedName>
        <fullName>Defensin-like protein 230</fullName>
    </recommendedName>
    <alternativeName>
        <fullName>Disease resistance response protein 230</fullName>
    </alternativeName>
</protein>
<accession>Q01783</accession>
<proteinExistence type="evidence at transcript level"/>
<gene>
    <name type="primary">PI230</name>
</gene>